<organism>
    <name type="scientific">Aspergillus oryzae (strain ATCC 42149 / RIB 40)</name>
    <name type="common">Yellow koji mold</name>
    <dbReference type="NCBI Taxonomy" id="510516"/>
    <lineage>
        <taxon>Eukaryota</taxon>
        <taxon>Fungi</taxon>
        <taxon>Dikarya</taxon>
        <taxon>Ascomycota</taxon>
        <taxon>Pezizomycotina</taxon>
        <taxon>Eurotiomycetes</taxon>
        <taxon>Eurotiomycetidae</taxon>
        <taxon>Eurotiales</taxon>
        <taxon>Aspergillaceae</taxon>
        <taxon>Aspergillus</taxon>
        <taxon>Aspergillus subgen. Circumdati</taxon>
    </lineage>
</organism>
<sequence>MAVRAQFENSNEVGVFARLTNSYAVVAIGASENFYSVFEAELQDVIPICHATIAGTRIVGRLTAGNRKGLLVPTTTTDQELQHLRNTLPDSVKIQRIEERLSALGNVICCNDHVALIHPDLERETEEIIADVLGVEVFRQTIADNVLTGSYMALSNQGGIVHPKTSIRDQDELSSLLQVPLVAGSVNRGSAVVGAGMVVNDWLAVTGLDTTATELSVIESVFRLGEMGPRGVGMGSTNKESIVESFY</sequence>
<reference key="1">
    <citation type="journal article" date="2005" name="Nature">
        <title>Genome sequencing and analysis of Aspergillus oryzae.</title>
        <authorList>
            <person name="Machida M."/>
            <person name="Asai K."/>
            <person name="Sano M."/>
            <person name="Tanaka T."/>
            <person name="Kumagai T."/>
            <person name="Terai G."/>
            <person name="Kusumoto K."/>
            <person name="Arima T."/>
            <person name="Akita O."/>
            <person name="Kashiwagi Y."/>
            <person name="Abe K."/>
            <person name="Gomi K."/>
            <person name="Horiuchi H."/>
            <person name="Kitamoto K."/>
            <person name="Kobayashi T."/>
            <person name="Takeuchi M."/>
            <person name="Denning D.W."/>
            <person name="Galagan J.E."/>
            <person name="Nierman W.C."/>
            <person name="Yu J."/>
            <person name="Archer D.B."/>
            <person name="Bennett J.W."/>
            <person name="Bhatnagar D."/>
            <person name="Cleveland T.E."/>
            <person name="Fedorova N.D."/>
            <person name="Gotoh O."/>
            <person name="Horikawa H."/>
            <person name="Hosoyama A."/>
            <person name="Ichinomiya M."/>
            <person name="Igarashi R."/>
            <person name="Iwashita K."/>
            <person name="Juvvadi P.R."/>
            <person name="Kato M."/>
            <person name="Kato Y."/>
            <person name="Kin T."/>
            <person name="Kokubun A."/>
            <person name="Maeda H."/>
            <person name="Maeyama N."/>
            <person name="Maruyama J."/>
            <person name="Nagasaki H."/>
            <person name="Nakajima T."/>
            <person name="Oda K."/>
            <person name="Okada K."/>
            <person name="Paulsen I."/>
            <person name="Sakamoto K."/>
            <person name="Sawano T."/>
            <person name="Takahashi M."/>
            <person name="Takase K."/>
            <person name="Terabayashi Y."/>
            <person name="Wortman J.R."/>
            <person name="Yamada O."/>
            <person name="Yamagata Y."/>
            <person name="Anazawa H."/>
            <person name="Hata Y."/>
            <person name="Koide Y."/>
            <person name="Komori T."/>
            <person name="Koyama Y."/>
            <person name="Minetoki T."/>
            <person name="Suharnan S."/>
            <person name="Tanaka A."/>
            <person name="Isono K."/>
            <person name="Kuhara S."/>
            <person name="Ogasawara N."/>
            <person name="Kikuchi H."/>
        </authorList>
    </citation>
    <scope>NUCLEOTIDE SEQUENCE [LARGE SCALE GENOMIC DNA]</scope>
    <source>
        <strain>ATCC 42149 / RIB 40</strain>
    </source>
</reference>
<feature type="chain" id="PRO_0000402106" description="Eukaryotic translation initiation factor 6">
    <location>
        <begin position="1"/>
        <end position="247"/>
    </location>
</feature>
<feature type="modified residue" description="Phosphoserine; by CK1" evidence="1">
    <location>
        <position position="174"/>
    </location>
</feature>
<feature type="modified residue" description="Phosphoserine; by CK1" evidence="1">
    <location>
        <position position="175"/>
    </location>
</feature>
<name>IF6_ASPOR</name>
<keyword id="KW-0963">Cytoplasm</keyword>
<keyword id="KW-0396">Initiation factor</keyword>
<keyword id="KW-0539">Nucleus</keyword>
<keyword id="KW-0597">Phosphoprotein</keyword>
<keyword id="KW-0648">Protein biosynthesis</keyword>
<keyword id="KW-1185">Reference proteome</keyword>
<keyword id="KW-0690">Ribosome biogenesis</keyword>
<protein>
    <recommendedName>
        <fullName evidence="1">Eukaryotic translation initiation factor 6</fullName>
        <shortName evidence="1">eIF-6</shortName>
    </recommendedName>
</protein>
<accession>Q2UTN7</accession>
<proteinExistence type="inferred from homology"/>
<gene>
    <name type="primary">tif6</name>
    <name type="ORF">AO090009000659</name>
</gene>
<evidence type="ECO:0000255" key="1">
    <source>
        <dbReference type="HAMAP-Rule" id="MF_03132"/>
    </source>
</evidence>
<evidence type="ECO:0000305" key="2"/>
<comment type="function">
    <text evidence="1">Binds to the 60S ribosomal subunit and prevents its association with the 40S ribosomal subunit to form the 80S initiation complex in the cytoplasm. Is also involved in ribosome biogenesis. Associates with pre-60S subunits in the nucleus and is involved in its nuclear export.</text>
</comment>
<comment type="subunit">
    <text evidence="1">Monomer. Associates with the 60S ribosomal subunit.</text>
</comment>
<comment type="subcellular location">
    <subcellularLocation>
        <location evidence="1">Cytoplasm</location>
    </subcellularLocation>
    <subcellularLocation>
        <location evidence="1">Nucleus</location>
        <location evidence="1">Nucleolus</location>
    </subcellularLocation>
    <text evidence="1">Shuttles between cytoplasm and nucleus/nucleolus.</text>
</comment>
<comment type="PTM">
    <text evidence="1">Phosphorylation at Ser-174 and Ser-175 promotes nuclear export.</text>
</comment>
<comment type="similarity">
    <text evidence="1">Belongs to the eIF-6 family.</text>
</comment>
<comment type="sequence caution" evidence="2">
    <conflict type="erroneous gene model prediction">
        <sequence resource="EMBL-CDS" id="BAE55078"/>
    </conflict>
</comment>
<dbReference type="EMBL" id="BA000049">
    <property type="protein sequence ID" value="BAE55078.1"/>
    <property type="status" value="ALT_SEQ"/>
    <property type="molecule type" value="Genomic_DNA"/>
</dbReference>
<dbReference type="RefSeq" id="XP_001817080.2">
    <property type="nucleotide sequence ID" value="XM_001817028.2"/>
</dbReference>
<dbReference type="SMR" id="Q2UTN7"/>
<dbReference type="STRING" id="510516.Q2UTN7"/>
<dbReference type="VEuPathDB" id="FungiDB:AO090009000659"/>
<dbReference type="Proteomes" id="UP000006564">
    <property type="component" value="Chromosome 1"/>
</dbReference>
<dbReference type="GO" id="GO:0005737">
    <property type="term" value="C:cytoplasm"/>
    <property type="evidence" value="ECO:0007669"/>
    <property type="project" value="UniProtKB-SubCell"/>
</dbReference>
<dbReference type="GO" id="GO:0005730">
    <property type="term" value="C:nucleolus"/>
    <property type="evidence" value="ECO:0007669"/>
    <property type="project" value="UniProtKB-SubCell"/>
</dbReference>
<dbReference type="GO" id="GO:0030687">
    <property type="term" value="C:preribosome, large subunit precursor"/>
    <property type="evidence" value="ECO:0007669"/>
    <property type="project" value="EnsemblFungi"/>
</dbReference>
<dbReference type="GO" id="GO:0043023">
    <property type="term" value="F:ribosomal large subunit binding"/>
    <property type="evidence" value="ECO:0007669"/>
    <property type="project" value="UniProtKB-UniRule"/>
</dbReference>
<dbReference type="GO" id="GO:0003743">
    <property type="term" value="F:translation initiation factor activity"/>
    <property type="evidence" value="ECO:0007669"/>
    <property type="project" value="UniProtKB-UniRule"/>
</dbReference>
<dbReference type="GO" id="GO:1902626">
    <property type="term" value="P:assembly of large subunit precursor of preribosome"/>
    <property type="evidence" value="ECO:0007669"/>
    <property type="project" value="EnsemblFungi"/>
</dbReference>
<dbReference type="GO" id="GO:0042256">
    <property type="term" value="P:cytosolic ribosome assembly"/>
    <property type="evidence" value="ECO:0007669"/>
    <property type="project" value="UniProtKB-UniRule"/>
</dbReference>
<dbReference type="GO" id="GO:0000466">
    <property type="term" value="P:maturation of 5.8S rRNA from tricistronic rRNA transcript (SSU-rRNA, 5.8S rRNA, LSU-rRNA)"/>
    <property type="evidence" value="ECO:0007669"/>
    <property type="project" value="EnsemblFungi"/>
</dbReference>
<dbReference type="GO" id="GO:0000463">
    <property type="term" value="P:maturation of LSU-rRNA from tricistronic rRNA transcript (SSU-rRNA, 5.8S rRNA, LSU-rRNA)"/>
    <property type="evidence" value="ECO:0007669"/>
    <property type="project" value="EnsemblFungi"/>
</dbReference>
<dbReference type="GO" id="GO:0000054">
    <property type="term" value="P:ribosomal subunit export from nucleus"/>
    <property type="evidence" value="ECO:0007669"/>
    <property type="project" value="UniProtKB-UniRule"/>
</dbReference>
<dbReference type="CDD" id="cd00527">
    <property type="entry name" value="IF6"/>
    <property type="match status" value="1"/>
</dbReference>
<dbReference type="FunFam" id="3.75.10.10:FF:000001">
    <property type="entry name" value="Eukaryotic translation initiation factor 6"/>
    <property type="match status" value="1"/>
</dbReference>
<dbReference type="Gene3D" id="3.75.10.10">
    <property type="entry name" value="L-arginine/glycine Amidinotransferase, Chain A"/>
    <property type="match status" value="1"/>
</dbReference>
<dbReference type="HAMAP" id="MF_00032">
    <property type="entry name" value="eIF_6"/>
    <property type="match status" value="1"/>
</dbReference>
<dbReference type="InterPro" id="IPR002769">
    <property type="entry name" value="eIF6"/>
</dbReference>
<dbReference type="NCBIfam" id="TIGR00323">
    <property type="entry name" value="eIF-6"/>
    <property type="match status" value="1"/>
</dbReference>
<dbReference type="PANTHER" id="PTHR10784">
    <property type="entry name" value="TRANSLATION INITIATION FACTOR 6"/>
    <property type="match status" value="1"/>
</dbReference>
<dbReference type="Pfam" id="PF01912">
    <property type="entry name" value="eIF-6"/>
    <property type="match status" value="1"/>
</dbReference>
<dbReference type="PIRSF" id="PIRSF006413">
    <property type="entry name" value="IF-6"/>
    <property type="match status" value="1"/>
</dbReference>
<dbReference type="SMART" id="SM00654">
    <property type="entry name" value="eIF6"/>
    <property type="match status" value="1"/>
</dbReference>
<dbReference type="SUPFAM" id="SSF55909">
    <property type="entry name" value="Pentein"/>
    <property type="match status" value="1"/>
</dbReference>